<comment type="function">
    <text evidence="1">Catalyzes the irreversible NADPH-dependent deamination of GMP to IMP. It functions in the conversion of nucleobase, nucleoside and nucleotide derivatives of G to A nucleotides, and in maintaining the intracellular balance of A and G nucleotides.</text>
</comment>
<comment type="catalytic activity">
    <reaction evidence="1">
        <text>IMP + NH4(+) + NADP(+) = GMP + NADPH + 2 H(+)</text>
        <dbReference type="Rhea" id="RHEA:17185"/>
        <dbReference type="ChEBI" id="CHEBI:15378"/>
        <dbReference type="ChEBI" id="CHEBI:28938"/>
        <dbReference type="ChEBI" id="CHEBI:57783"/>
        <dbReference type="ChEBI" id="CHEBI:58053"/>
        <dbReference type="ChEBI" id="CHEBI:58115"/>
        <dbReference type="ChEBI" id="CHEBI:58349"/>
        <dbReference type="EC" id="1.7.1.7"/>
    </reaction>
</comment>
<comment type="subunit">
    <text evidence="1">Homotetramer.</text>
</comment>
<comment type="similarity">
    <text evidence="1">Belongs to the IMPDH/GMPR family. GuaC type 1 subfamily.</text>
</comment>
<reference key="1">
    <citation type="journal article" date="2009" name="PLoS Genet.">
        <title>Organised genome dynamics in the Escherichia coli species results in highly diverse adaptive paths.</title>
        <authorList>
            <person name="Touchon M."/>
            <person name="Hoede C."/>
            <person name="Tenaillon O."/>
            <person name="Barbe V."/>
            <person name="Baeriswyl S."/>
            <person name="Bidet P."/>
            <person name="Bingen E."/>
            <person name="Bonacorsi S."/>
            <person name="Bouchier C."/>
            <person name="Bouvet O."/>
            <person name="Calteau A."/>
            <person name="Chiapello H."/>
            <person name="Clermont O."/>
            <person name="Cruveiller S."/>
            <person name="Danchin A."/>
            <person name="Diard M."/>
            <person name="Dossat C."/>
            <person name="Karoui M.E."/>
            <person name="Frapy E."/>
            <person name="Garry L."/>
            <person name="Ghigo J.M."/>
            <person name="Gilles A.M."/>
            <person name="Johnson J."/>
            <person name="Le Bouguenec C."/>
            <person name="Lescat M."/>
            <person name="Mangenot S."/>
            <person name="Martinez-Jehanne V."/>
            <person name="Matic I."/>
            <person name="Nassif X."/>
            <person name="Oztas S."/>
            <person name="Petit M.A."/>
            <person name="Pichon C."/>
            <person name="Rouy Z."/>
            <person name="Ruf C.S."/>
            <person name="Schneider D."/>
            <person name="Tourret J."/>
            <person name="Vacherie B."/>
            <person name="Vallenet D."/>
            <person name="Medigue C."/>
            <person name="Rocha E.P.C."/>
            <person name="Denamur E."/>
        </authorList>
    </citation>
    <scope>NUCLEOTIDE SEQUENCE [LARGE SCALE GENOMIC DNA]</scope>
    <source>
        <strain>IAI39 / ExPEC</strain>
    </source>
</reference>
<gene>
    <name evidence="1" type="primary">guaC</name>
    <name type="ordered locus">ECIAI39_0105</name>
</gene>
<feature type="chain" id="PRO_1000129852" description="GMP reductase">
    <location>
        <begin position="1"/>
        <end position="347"/>
    </location>
</feature>
<feature type="active site" description="Thioimidate intermediate" evidence="1">
    <location>
        <position position="186"/>
    </location>
</feature>
<feature type="binding site" evidence="1">
    <location>
        <begin position="108"/>
        <end position="131"/>
    </location>
    <ligand>
        <name>NADP(+)</name>
        <dbReference type="ChEBI" id="CHEBI:58349"/>
    </ligand>
</feature>
<feature type="binding site" evidence="1">
    <location>
        <position position="181"/>
    </location>
    <ligand>
        <name>K(+)</name>
        <dbReference type="ChEBI" id="CHEBI:29103"/>
    </ligand>
</feature>
<feature type="binding site" evidence="1">
    <location>
        <position position="183"/>
    </location>
    <ligand>
        <name>K(+)</name>
        <dbReference type="ChEBI" id="CHEBI:29103"/>
    </ligand>
</feature>
<feature type="binding site" evidence="1">
    <location>
        <begin position="216"/>
        <end position="239"/>
    </location>
    <ligand>
        <name>NADP(+)</name>
        <dbReference type="ChEBI" id="CHEBI:58349"/>
    </ligand>
</feature>
<accession>B7NI65</accession>
<organism>
    <name type="scientific">Escherichia coli O7:K1 (strain IAI39 / ExPEC)</name>
    <dbReference type="NCBI Taxonomy" id="585057"/>
    <lineage>
        <taxon>Bacteria</taxon>
        <taxon>Pseudomonadati</taxon>
        <taxon>Pseudomonadota</taxon>
        <taxon>Gammaproteobacteria</taxon>
        <taxon>Enterobacterales</taxon>
        <taxon>Enterobacteriaceae</taxon>
        <taxon>Escherichia</taxon>
    </lineage>
</organism>
<keyword id="KW-0479">Metal-binding</keyword>
<keyword id="KW-0521">NADP</keyword>
<keyword id="KW-0560">Oxidoreductase</keyword>
<keyword id="KW-0630">Potassium</keyword>
<proteinExistence type="inferred from homology"/>
<name>GUAC_ECO7I</name>
<sequence>MRIEEDLKLGFKDVLIRPKRSTLKSRSDVELERQFTFKHSGQSWSGVPIIAANMDTVGTFSMASALASFDILTAVHKHYSVEEWQAFINNSSADVLKHVMVSTGTSDADFEKTKQILDLNPALNFVCIDVANGYSEHFVQFVAKAREAWPTKTICAGNVVTGEMCEELILSGADIVKVGIGPGSVCTTRVKTGVGYPQLSAVIECADAAHGLGGMIVSDGGCTTPGDVAKAFGGGADFVMLGGMLAGHEESGGRIVEENGEKFMLFYGMSSESAMKRHVGGVAEYRAAEGKTVKLPLRGPVENTARDILGGLRSACTYVGASRLKELTKRTTFIRVLEQENRIFNNL</sequence>
<evidence type="ECO:0000255" key="1">
    <source>
        <dbReference type="HAMAP-Rule" id="MF_00596"/>
    </source>
</evidence>
<protein>
    <recommendedName>
        <fullName evidence="1">GMP reductase</fullName>
        <ecNumber evidence="1">1.7.1.7</ecNumber>
    </recommendedName>
    <alternativeName>
        <fullName evidence="1">Guanosine 5'-monophosphate oxidoreductase</fullName>
        <shortName evidence="1">Guanosine monophosphate reductase</shortName>
    </alternativeName>
</protein>
<dbReference type="EC" id="1.7.1.7" evidence="1"/>
<dbReference type="EMBL" id="CU928164">
    <property type="protein sequence ID" value="CAR16246.1"/>
    <property type="molecule type" value="Genomic_DNA"/>
</dbReference>
<dbReference type="RefSeq" id="WP_001217337.1">
    <property type="nucleotide sequence ID" value="NC_011750.1"/>
</dbReference>
<dbReference type="RefSeq" id="YP_002406154.1">
    <property type="nucleotide sequence ID" value="NC_011750.1"/>
</dbReference>
<dbReference type="SMR" id="B7NI65"/>
<dbReference type="STRING" id="585057.ECIAI39_0105"/>
<dbReference type="KEGG" id="ect:ECIAI39_0105"/>
<dbReference type="PATRIC" id="fig|585057.6.peg.115"/>
<dbReference type="HOGENOM" id="CLU_022552_5_3_6"/>
<dbReference type="Proteomes" id="UP000000749">
    <property type="component" value="Chromosome"/>
</dbReference>
<dbReference type="GO" id="GO:0005829">
    <property type="term" value="C:cytosol"/>
    <property type="evidence" value="ECO:0007669"/>
    <property type="project" value="TreeGrafter"/>
</dbReference>
<dbReference type="GO" id="GO:1902560">
    <property type="term" value="C:GMP reductase complex"/>
    <property type="evidence" value="ECO:0007669"/>
    <property type="project" value="InterPro"/>
</dbReference>
<dbReference type="GO" id="GO:0003920">
    <property type="term" value="F:GMP reductase activity"/>
    <property type="evidence" value="ECO:0007669"/>
    <property type="project" value="UniProtKB-UniRule"/>
</dbReference>
<dbReference type="GO" id="GO:0046872">
    <property type="term" value="F:metal ion binding"/>
    <property type="evidence" value="ECO:0007669"/>
    <property type="project" value="UniProtKB-KW"/>
</dbReference>
<dbReference type="GO" id="GO:0006163">
    <property type="term" value="P:purine nucleotide metabolic process"/>
    <property type="evidence" value="ECO:0007669"/>
    <property type="project" value="UniProtKB-UniRule"/>
</dbReference>
<dbReference type="CDD" id="cd00381">
    <property type="entry name" value="IMPDH"/>
    <property type="match status" value="1"/>
</dbReference>
<dbReference type="FunFam" id="3.20.20.70:FF:000012">
    <property type="entry name" value="GMP reductase"/>
    <property type="match status" value="1"/>
</dbReference>
<dbReference type="Gene3D" id="3.20.20.70">
    <property type="entry name" value="Aldolase class I"/>
    <property type="match status" value="1"/>
</dbReference>
<dbReference type="HAMAP" id="MF_00596">
    <property type="entry name" value="GMP_reduct_type1"/>
    <property type="match status" value="1"/>
</dbReference>
<dbReference type="InterPro" id="IPR013785">
    <property type="entry name" value="Aldolase_TIM"/>
</dbReference>
<dbReference type="InterPro" id="IPR050139">
    <property type="entry name" value="GMP_reductase"/>
</dbReference>
<dbReference type="InterPro" id="IPR005993">
    <property type="entry name" value="GMPR"/>
</dbReference>
<dbReference type="InterPro" id="IPR015875">
    <property type="entry name" value="IMP_DH/GMP_Rdtase_CS"/>
</dbReference>
<dbReference type="InterPro" id="IPR001093">
    <property type="entry name" value="IMP_DH_GMPRt"/>
</dbReference>
<dbReference type="NCBIfam" id="TIGR01305">
    <property type="entry name" value="GMP_reduct_1"/>
    <property type="match status" value="1"/>
</dbReference>
<dbReference type="NCBIfam" id="NF003470">
    <property type="entry name" value="PRK05096.1"/>
    <property type="match status" value="1"/>
</dbReference>
<dbReference type="PANTHER" id="PTHR43170">
    <property type="entry name" value="GMP REDUCTASE"/>
    <property type="match status" value="1"/>
</dbReference>
<dbReference type="PANTHER" id="PTHR43170:SF5">
    <property type="entry name" value="GMP REDUCTASE"/>
    <property type="match status" value="1"/>
</dbReference>
<dbReference type="Pfam" id="PF00478">
    <property type="entry name" value="IMPDH"/>
    <property type="match status" value="1"/>
</dbReference>
<dbReference type="PIRSF" id="PIRSF000235">
    <property type="entry name" value="GMP_reductase"/>
    <property type="match status" value="1"/>
</dbReference>
<dbReference type="SMART" id="SM01240">
    <property type="entry name" value="IMPDH"/>
    <property type="match status" value="1"/>
</dbReference>
<dbReference type="SUPFAM" id="SSF51412">
    <property type="entry name" value="Inosine monophosphate dehydrogenase (IMPDH)"/>
    <property type="match status" value="1"/>
</dbReference>
<dbReference type="PROSITE" id="PS00487">
    <property type="entry name" value="IMP_DH_GMP_RED"/>
    <property type="match status" value="1"/>
</dbReference>